<feature type="chain" id="PRO_0000159025" description="UPF0175 protein APE_0276a">
    <location>
        <begin position="1"/>
        <end position="89"/>
    </location>
</feature>
<sequence>MAGIGSRRIVIEVPEGLRVPPGELEKRLRIELALRLYEKGIASLGQARKIAGLSKWDFLELLAREGIPLHYSEEELKEDLEVAKKLAEK</sequence>
<protein>
    <recommendedName>
        <fullName>UPF0175 protein APE_0276a</fullName>
    </recommendedName>
</protein>
<comment type="similarity">
    <text evidence="1">Belongs to the UPF0175 family.</text>
</comment>
<accession>P58322</accession>
<accession>Q05E83</accession>
<dbReference type="EMBL" id="BA000002">
    <property type="protein sequence ID" value="BAF34718.1"/>
    <property type="molecule type" value="Genomic_DNA"/>
</dbReference>
<dbReference type="RefSeq" id="WP_010865630.1">
    <property type="nucleotide sequence ID" value="NC_000854.2"/>
</dbReference>
<dbReference type="SMR" id="P58322"/>
<dbReference type="STRING" id="272557.APE_0276a"/>
<dbReference type="EnsemblBacteria" id="BAF34718">
    <property type="protein sequence ID" value="BAF34718"/>
    <property type="gene ID" value="APE_0276a"/>
</dbReference>
<dbReference type="GeneID" id="4525211"/>
<dbReference type="KEGG" id="ape:APE_0276a"/>
<dbReference type="eggNOG" id="arCOG00722">
    <property type="taxonomic scope" value="Archaea"/>
</dbReference>
<dbReference type="Proteomes" id="UP000002518">
    <property type="component" value="Chromosome"/>
</dbReference>
<dbReference type="InterPro" id="IPR005368">
    <property type="entry name" value="UPF0175"/>
</dbReference>
<dbReference type="InterPro" id="IPR052264">
    <property type="entry name" value="UPF0175_domain"/>
</dbReference>
<dbReference type="PANTHER" id="PTHR37525">
    <property type="entry name" value="UPF0175 PROTEIN SSL1255"/>
    <property type="match status" value="1"/>
</dbReference>
<dbReference type="PANTHER" id="PTHR37525:SF1">
    <property type="entry name" value="UPF0175 PROTEIN SSL1255"/>
    <property type="match status" value="1"/>
</dbReference>
<dbReference type="Pfam" id="PF03683">
    <property type="entry name" value="UPF0175"/>
    <property type="match status" value="1"/>
</dbReference>
<proteinExistence type="inferred from homology"/>
<keyword id="KW-1185">Reference proteome</keyword>
<gene>
    <name type="ordered locus">APE_0276a</name>
</gene>
<name>Y27A_AERPE</name>
<evidence type="ECO:0000305" key="1"/>
<reference key="1">
    <citation type="journal article" date="1999" name="DNA Res.">
        <title>Complete genome sequence of an aerobic hyper-thermophilic crenarchaeon, Aeropyrum pernix K1.</title>
        <authorList>
            <person name="Kawarabayasi Y."/>
            <person name="Hino Y."/>
            <person name="Horikawa H."/>
            <person name="Yamazaki S."/>
            <person name="Haikawa Y."/>
            <person name="Jin-no K."/>
            <person name="Takahashi M."/>
            <person name="Sekine M."/>
            <person name="Baba S."/>
            <person name="Ankai A."/>
            <person name="Kosugi H."/>
            <person name="Hosoyama A."/>
            <person name="Fukui S."/>
            <person name="Nagai Y."/>
            <person name="Nishijima K."/>
            <person name="Nakazawa H."/>
            <person name="Takamiya M."/>
            <person name="Masuda S."/>
            <person name="Funahashi T."/>
            <person name="Tanaka T."/>
            <person name="Kudoh Y."/>
            <person name="Yamazaki J."/>
            <person name="Kushida N."/>
            <person name="Oguchi A."/>
            <person name="Aoki K."/>
            <person name="Kubota K."/>
            <person name="Nakamura Y."/>
            <person name="Nomura N."/>
            <person name="Sako Y."/>
            <person name="Kikuchi H."/>
        </authorList>
    </citation>
    <scope>NUCLEOTIDE SEQUENCE [LARGE SCALE GENOMIC DNA]</scope>
    <source>
        <strain>ATCC 700893 / DSM 11879 / JCM 9820 / NBRC 100138 / K1</strain>
    </source>
</reference>
<reference key="2">
    <citation type="unpublished observations" date="2001-05">
        <authorList>
            <person name="Medigue C."/>
            <person name="Bocs S."/>
        </authorList>
    </citation>
    <scope>IDENTIFICATION</scope>
</reference>
<organism>
    <name type="scientific">Aeropyrum pernix (strain ATCC 700893 / DSM 11879 / JCM 9820 / NBRC 100138 / K1)</name>
    <dbReference type="NCBI Taxonomy" id="272557"/>
    <lineage>
        <taxon>Archaea</taxon>
        <taxon>Thermoproteota</taxon>
        <taxon>Thermoprotei</taxon>
        <taxon>Desulfurococcales</taxon>
        <taxon>Desulfurococcaceae</taxon>
        <taxon>Aeropyrum</taxon>
    </lineage>
</organism>